<gene>
    <name type="ORF">CHGG_02900</name>
</gene>
<dbReference type="EC" id="3.1.1.-"/>
<dbReference type="EMBL" id="CH408030">
    <property type="protein sequence ID" value="EAQ90965.1"/>
    <property type="molecule type" value="Genomic_DNA"/>
</dbReference>
<dbReference type="RefSeq" id="XP_001229416.1">
    <property type="nucleotide sequence ID" value="XM_001229415.1"/>
</dbReference>
<dbReference type="STRING" id="306901.Q2HA54"/>
<dbReference type="GeneID" id="4389131"/>
<dbReference type="VEuPathDB" id="FungiDB:CHGG_02900"/>
<dbReference type="eggNOG" id="KOG2214">
    <property type="taxonomic scope" value="Eukaryota"/>
</dbReference>
<dbReference type="HOGENOM" id="CLU_009031_2_0_1"/>
<dbReference type="InParanoid" id="Q2HA54"/>
<dbReference type="OMA" id="CSWFTRG"/>
<dbReference type="OrthoDB" id="15478at2759"/>
<dbReference type="Proteomes" id="UP000001056">
    <property type="component" value="Unassembled WGS sequence"/>
</dbReference>
<dbReference type="GO" id="GO:0016020">
    <property type="term" value="C:membrane"/>
    <property type="evidence" value="ECO:0007669"/>
    <property type="project" value="UniProtKB-SubCell"/>
</dbReference>
<dbReference type="GO" id="GO:0004806">
    <property type="term" value="F:triacylglycerol lipase activity"/>
    <property type="evidence" value="ECO:0007669"/>
    <property type="project" value="InterPro"/>
</dbReference>
<dbReference type="GO" id="GO:0016042">
    <property type="term" value="P:lipid catabolic process"/>
    <property type="evidence" value="ECO:0007669"/>
    <property type="project" value="UniProtKB-KW"/>
</dbReference>
<dbReference type="GO" id="GO:0006641">
    <property type="term" value="P:triglyceride metabolic process"/>
    <property type="evidence" value="ECO:0007669"/>
    <property type="project" value="UniProtKB-ARBA"/>
</dbReference>
<dbReference type="CDD" id="cd07232">
    <property type="entry name" value="Pat_PLPL"/>
    <property type="match status" value="1"/>
</dbReference>
<dbReference type="Gene3D" id="3.40.1090.10">
    <property type="entry name" value="Cytosolic phospholipase A2 catalytic domain"/>
    <property type="match status" value="2"/>
</dbReference>
<dbReference type="InterPro" id="IPR016035">
    <property type="entry name" value="Acyl_Trfase/lysoPLipase"/>
</dbReference>
<dbReference type="InterPro" id="IPR050301">
    <property type="entry name" value="NTE"/>
</dbReference>
<dbReference type="InterPro" id="IPR002641">
    <property type="entry name" value="PNPLA_dom"/>
</dbReference>
<dbReference type="InterPro" id="IPR021771">
    <property type="entry name" value="Triacylglycerol_lipase_N"/>
</dbReference>
<dbReference type="PANTHER" id="PTHR14226">
    <property type="entry name" value="NEUROPATHY TARGET ESTERASE/SWISS CHEESE D.MELANOGASTER"/>
    <property type="match status" value="1"/>
</dbReference>
<dbReference type="PANTHER" id="PTHR14226:SF66">
    <property type="entry name" value="TRIACYLGLYCEROL LIPASE PTL2"/>
    <property type="match status" value="1"/>
</dbReference>
<dbReference type="Pfam" id="PF11815">
    <property type="entry name" value="DUF3336"/>
    <property type="match status" value="1"/>
</dbReference>
<dbReference type="Pfam" id="PF01734">
    <property type="entry name" value="Patatin"/>
    <property type="match status" value="1"/>
</dbReference>
<dbReference type="SUPFAM" id="SSF52151">
    <property type="entry name" value="FabD/lysophospholipase-like"/>
    <property type="match status" value="1"/>
</dbReference>
<dbReference type="PROSITE" id="PS51635">
    <property type="entry name" value="PNPLA"/>
    <property type="match status" value="1"/>
</dbReference>
<accession>Q2HA54</accession>
<reference key="1">
    <citation type="journal article" date="2015" name="Genome Announc.">
        <title>Draft genome sequence of the cellulolytic fungus Chaetomium globosum.</title>
        <authorList>
            <person name="Cuomo C.A."/>
            <person name="Untereiner W.A."/>
            <person name="Ma L.-J."/>
            <person name="Grabherr M."/>
            <person name="Birren B.W."/>
        </authorList>
    </citation>
    <scope>NUCLEOTIDE SEQUENCE [LARGE SCALE GENOMIC DNA]</scope>
    <source>
        <strain>ATCC 6205 / CBS 148.51 / DSM 1962 / NBRC 6347 / NRRL 1970</strain>
    </source>
</reference>
<protein>
    <recommendedName>
        <fullName>Patatin-like phospholipase domain-containing protein CHGG_02900</fullName>
        <ecNumber>3.1.1.-</ecNumber>
    </recommendedName>
</protein>
<proteinExistence type="inferred from homology"/>
<name>PLPL_CHAGB</name>
<feature type="chain" id="PRO_0000295555" description="Patatin-like phospholipase domain-containing protein CHGG_02900">
    <location>
        <begin position="1"/>
        <end position="854"/>
    </location>
</feature>
<feature type="transmembrane region" description="Helical" evidence="2">
    <location>
        <begin position="199"/>
        <end position="219"/>
    </location>
</feature>
<feature type="domain" description="PNPLA" evidence="3">
    <location>
        <begin position="387"/>
        <end position="578"/>
    </location>
</feature>
<feature type="region of interest" description="Disordered" evidence="4">
    <location>
        <begin position="1"/>
        <end position="29"/>
    </location>
</feature>
<feature type="region of interest" description="Disordered" evidence="4">
    <location>
        <begin position="58"/>
        <end position="138"/>
    </location>
</feature>
<feature type="region of interest" description="Disordered" evidence="4">
    <location>
        <begin position="159"/>
        <end position="186"/>
    </location>
</feature>
<feature type="region of interest" description="Disordered" evidence="4">
    <location>
        <begin position="724"/>
        <end position="776"/>
    </location>
</feature>
<feature type="region of interest" description="Disordered" evidence="4">
    <location>
        <begin position="791"/>
        <end position="830"/>
    </location>
</feature>
<feature type="short sequence motif" description="GXSXG" evidence="3">
    <location>
        <begin position="418"/>
        <end position="422"/>
    </location>
</feature>
<feature type="compositionally biased region" description="Basic and acidic residues" evidence="4">
    <location>
        <begin position="96"/>
        <end position="116"/>
    </location>
</feature>
<feature type="compositionally biased region" description="Low complexity" evidence="4">
    <location>
        <begin position="119"/>
        <end position="132"/>
    </location>
</feature>
<feature type="compositionally biased region" description="Gly residues" evidence="4">
    <location>
        <begin position="729"/>
        <end position="751"/>
    </location>
</feature>
<feature type="compositionally biased region" description="Low complexity" evidence="4">
    <location>
        <begin position="752"/>
        <end position="761"/>
    </location>
</feature>
<feature type="compositionally biased region" description="Acidic residues" evidence="4">
    <location>
        <begin position="799"/>
        <end position="812"/>
    </location>
</feature>
<feature type="active site" description="Nucleophile" evidence="3">
    <location>
        <position position="420"/>
    </location>
</feature>
<feature type="active site" description="Proton acceptor" evidence="3">
    <location>
        <position position="565"/>
    </location>
</feature>
<sequence length="854" mass="94412">MAGPGYDRVDSKDDEPPNIQIPSRTYGFPPEAFDWSRLPDFDTNFLPPEHVEAFIQALSAPDPIPPTPDGGATGSSSYRLNSPAWHRGSTTSFDLDLARRPESSGVGFHDEDRTARDSPAGAATAAAAGVATPGPPLSRRASSNSLFISARNDWAPISQRRVARAKTAPQSSSRNDKKKKRARSKDETREGYLYPLLKWPLLGVVTCWLVGLSVVHVLARLYITVYERYWAWRGERGRLRRAMRATARYSDWVAAARRMDDFLGNDSWKVDDAFAYYDNKTVRRVLAEMRRSRRRAEEAGGRDTEQGREAIEDLKVLIEACVKNNFAGIENPRLYSQTYYGTKNLVQNFIDEVERSLKFLVETERLSKEEKRVMFKGICANYGRTALCLSGGATFAYYHFGVVKALLEEDYLPDIITGTSGGALVAALVATRTNEELKELLIPALACRITACREPISVWFRRWWATGARFDSVDWARQCAWWTRGSLTFREAYERTGRILNVSCVPADQHSPTILCNYLTSPDCVIWSAVLASAAVPGILNPVVLLMKTRSGQLLPYSFGHKWKDGSLRTDIPIKALNLQFNVNFTIVSQVNPHINLFFFSSRGSVGQPVTHRRGRGWRGGYLGTVLVQFTKLDLTKWLRVLRSLELLPRPLGQDWSLLWLQDFGGTVTVWPRCLLSDFARILSDPDPARLARMIHEGQQSAFPKLRFVANRLRVERLVERGRRENRRGGGLGDGGVGSSGGAGGGAGGGQAEAVAGQAAGPGTGQRRPSFESILSEDDLRSLLKKRRVERGGIGSGETESEDETSDLDADFYEGITYDGGDDDAGLEFGAAGMRQPGVATPAGLGGVERGDLS</sequence>
<keyword id="KW-0378">Hydrolase</keyword>
<keyword id="KW-0442">Lipid degradation</keyword>
<keyword id="KW-0443">Lipid metabolism</keyword>
<keyword id="KW-0472">Membrane</keyword>
<keyword id="KW-1185">Reference proteome</keyword>
<keyword id="KW-0812">Transmembrane</keyword>
<keyword id="KW-1133">Transmembrane helix</keyword>
<comment type="function">
    <text evidence="1">Probable lipid hydrolase.</text>
</comment>
<comment type="subcellular location">
    <subcellularLocation>
        <location evidence="5">Membrane</location>
        <topology evidence="5">Single-pass membrane protein</topology>
    </subcellularLocation>
</comment>
<comment type="similarity">
    <text evidence="5">Belongs to the PLPL family.</text>
</comment>
<organism>
    <name type="scientific">Chaetomium globosum (strain ATCC 6205 / CBS 148.51 / DSM 1962 / NBRC 6347 / NRRL 1970)</name>
    <name type="common">Soil fungus</name>
    <dbReference type="NCBI Taxonomy" id="306901"/>
    <lineage>
        <taxon>Eukaryota</taxon>
        <taxon>Fungi</taxon>
        <taxon>Dikarya</taxon>
        <taxon>Ascomycota</taxon>
        <taxon>Pezizomycotina</taxon>
        <taxon>Sordariomycetes</taxon>
        <taxon>Sordariomycetidae</taxon>
        <taxon>Sordariales</taxon>
        <taxon>Chaetomiaceae</taxon>
        <taxon>Chaetomium</taxon>
    </lineage>
</organism>
<evidence type="ECO:0000250" key="1"/>
<evidence type="ECO:0000255" key="2"/>
<evidence type="ECO:0000255" key="3">
    <source>
        <dbReference type="PROSITE-ProRule" id="PRU01161"/>
    </source>
</evidence>
<evidence type="ECO:0000256" key="4">
    <source>
        <dbReference type="SAM" id="MobiDB-lite"/>
    </source>
</evidence>
<evidence type="ECO:0000305" key="5"/>